<accession>B5RDG6</accession>
<sequence length="377" mass="41000">MSRGIIIIGSGFAARQLVKNIRKQDAHVPLTLIAADSMDEYNKPDLSHVISQSQRADDLNRQLAGEFAEQFNLRLFPHTWVADIDADAHVVKSQDKQWQYDKLVLATGAAAFVPPIAGRELMLTLNSQQEYRACETQLRDAQRVLIVGGGLIGSELAMDLCRAGKTVTLMDNAASLLASLMPPEVSSRLQHHLTDMGVHLLLKSQLQKLEKTEAGIRATLVSQHSIEVDAVIAATGLRPETALARRAGVAVNRGVCVDSYLQTSHPDIYAIGDCAEINGQVLPFLQPIQLSAMYLAKNLLGGNAPLKLPAMLVKVKTPELPLHLAGETQRSDLSWQITAESDGMIAKGMSGEGQLRAFVVSEDRMKEAFALLKTLSV</sequence>
<proteinExistence type="inferred from homology"/>
<keyword id="KW-0963">Cytoplasm</keyword>
<keyword id="KW-0274">FAD</keyword>
<keyword id="KW-0285">Flavoprotein</keyword>
<keyword id="KW-0520">NAD</keyword>
<keyword id="KW-0560">Oxidoreductase</keyword>
<protein>
    <recommendedName>
        <fullName evidence="1">Nitric oxide reductase FlRd-NAD(+) reductase</fullName>
        <ecNumber evidence="1">1.18.1.-</ecNumber>
    </recommendedName>
    <alternativeName>
        <fullName evidence="1">Flavorubredoxin reductase</fullName>
        <shortName evidence="1">FlRd-reductase</shortName>
        <shortName evidence="1">FlavoRb reductase</shortName>
    </alternativeName>
</protein>
<evidence type="ECO:0000255" key="1">
    <source>
        <dbReference type="HAMAP-Rule" id="MF_01313"/>
    </source>
</evidence>
<name>NORW_SALG2</name>
<comment type="function">
    <text evidence="1">One of at least two accessory proteins for anaerobic nitric oxide (NO) reductase. Reduces the rubredoxin moiety of NO reductase.</text>
</comment>
<comment type="catalytic activity">
    <reaction evidence="1">
        <text>2 reduced [nitric oxide reductase rubredoxin domain] + NAD(+) + H(+) = 2 oxidized [nitric oxide reductase rubredoxin domain] + NADH</text>
        <dbReference type="Rhea" id="RHEA:42960"/>
        <dbReference type="Rhea" id="RHEA-COMP:10304"/>
        <dbReference type="Rhea" id="RHEA-COMP:10305"/>
        <dbReference type="ChEBI" id="CHEBI:15378"/>
        <dbReference type="ChEBI" id="CHEBI:29033"/>
        <dbReference type="ChEBI" id="CHEBI:29034"/>
        <dbReference type="ChEBI" id="CHEBI:57540"/>
        <dbReference type="ChEBI" id="CHEBI:57945"/>
    </reaction>
</comment>
<comment type="cofactor">
    <cofactor evidence="1">
        <name>FAD</name>
        <dbReference type="ChEBI" id="CHEBI:57692"/>
    </cofactor>
</comment>
<comment type="pathway">
    <text evidence="1">Nitrogen metabolism; nitric oxide reduction.</text>
</comment>
<comment type="subcellular location">
    <subcellularLocation>
        <location evidence="1">Cytoplasm</location>
    </subcellularLocation>
</comment>
<comment type="similarity">
    <text evidence="1">Belongs to the FAD-dependent oxidoreductase family.</text>
</comment>
<gene>
    <name evidence="1" type="primary">norW</name>
    <name evidence="1" type="synonym">flrR</name>
    <name type="ordered locus">SG2744</name>
</gene>
<reference key="1">
    <citation type="journal article" date="2008" name="Genome Res.">
        <title>Comparative genome analysis of Salmonella enteritidis PT4 and Salmonella gallinarum 287/91 provides insights into evolutionary and host adaptation pathways.</title>
        <authorList>
            <person name="Thomson N.R."/>
            <person name="Clayton D.J."/>
            <person name="Windhorst D."/>
            <person name="Vernikos G."/>
            <person name="Davidson S."/>
            <person name="Churcher C."/>
            <person name="Quail M.A."/>
            <person name="Stevens M."/>
            <person name="Jones M.A."/>
            <person name="Watson M."/>
            <person name="Barron A."/>
            <person name="Layton A."/>
            <person name="Pickard D."/>
            <person name="Kingsley R.A."/>
            <person name="Bignell A."/>
            <person name="Clark L."/>
            <person name="Harris B."/>
            <person name="Ormond D."/>
            <person name="Abdellah Z."/>
            <person name="Brooks K."/>
            <person name="Cherevach I."/>
            <person name="Chillingworth T."/>
            <person name="Woodward J."/>
            <person name="Norberczak H."/>
            <person name="Lord A."/>
            <person name="Arrowsmith C."/>
            <person name="Jagels K."/>
            <person name="Moule S."/>
            <person name="Mungall K."/>
            <person name="Saunders M."/>
            <person name="Whitehead S."/>
            <person name="Chabalgoity J.A."/>
            <person name="Maskell D."/>
            <person name="Humphreys T."/>
            <person name="Roberts M."/>
            <person name="Barrow P.A."/>
            <person name="Dougan G."/>
            <person name="Parkhill J."/>
        </authorList>
    </citation>
    <scope>NUCLEOTIDE SEQUENCE [LARGE SCALE GENOMIC DNA]</scope>
    <source>
        <strain>287/91 / NCTC 13346</strain>
    </source>
</reference>
<organism>
    <name type="scientific">Salmonella gallinarum (strain 287/91 / NCTC 13346)</name>
    <dbReference type="NCBI Taxonomy" id="550538"/>
    <lineage>
        <taxon>Bacteria</taxon>
        <taxon>Pseudomonadati</taxon>
        <taxon>Pseudomonadota</taxon>
        <taxon>Gammaproteobacteria</taxon>
        <taxon>Enterobacterales</taxon>
        <taxon>Enterobacteriaceae</taxon>
        <taxon>Salmonella</taxon>
    </lineage>
</organism>
<feature type="chain" id="PRO_1000141180" description="Nitric oxide reductase FlRd-NAD(+) reductase">
    <location>
        <begin position="1"/>
        <end position="377"/>
    </location>
</feature>
<dbReference type="EC" id="1.18.1.-" evidence="1"/>
<dbReference type="EMBL" id="AM933173">
    <property type="protein sequence ID" value="CAR38553.1"/>
    <property type="molecule type" value="Genomic_DNA"/>
</dbReference>
<dbReference type="RefSeq" id="WP_000086325.1">
    <property type="nucleotide sequence ID" value="NC_011274.1"/>
</dbReference>
<dbReference type="SMR" id="B5RDG6"/>
<dbReference type="KEGG" id="seg:SG2744"/>
<dbReference type="HOGENOM" id="CLU_003291_4_4_6"/>
<dbReference type="UniPathway" id="UPA00638"/>
<dbReference type="Proteomes" id="UP000008321">
    <property type="component" value="Chromosome"/>
</dbReference>
<dbReference type="GO" id="GO:0005737">
    <property type="term" value="C:cytoplasm"/>
    <property type="evidence" value="ECO:0007669"/>
    <property type="project" value="UniProtKB-SubCell"/>
</dbReference>
<dbReference type="GO" id="GO:0016731">
    <property type="term" value="F:oxidoreductase activity, acting on iron-sulfur proteins as donors, NAD or NADP as acceptor"/>
    <property type="evidence" value="ECO:0007669"/>
    <property type="project" value="UniProtKB-UniRule"/>
</dbReference>
<dbReference type="Gene3D" id="3.30.390.120">
    <property type="match status" value="1"/>
</dbReference>
<dbReference type="Gene3D" id="3.50.50.60">
    <property type="entry name" value="FAD/NAD(P)-binding domain"/>
    <property type="match status" value="2"/>
</dbReference>
<dbReference type="HAMAP" id="MF_01313">
    <property type="entry name" value="NorW"/>
    <property type="match status" value="1"/>
</dbReference>
<dbReference type="InterPro" id="IPR050260">
    <property type="entry name" value="FAD-bd_OxRdtase"/>
</dbReference>
<dbReference type="InterPro" id="IPR036188">
    <property type="entry name" value="FAD/NAD-bd_sf"/>
</dbReference>
<dbReference type="InterPro" id="IPR023753">
    <property type="entry name" value="FAD/NAD-binding_dom"/>
</dbReference>
<dbReference type="InterPro" id="IPR023961">
    <property type="entry name" value="NO_rdtase_NorW"/>
</dbReference>
<dbReference type="InterPro" id="IPR041364">
    <property type="entry name" value="Rbx-bd"/>
</dbReference>
<dbReference type="NCBIfam" id="NF003437">
    <property type="entry name" value="PRK04965.1"/>
    <property type="match status" value="1"/>
</dbReference>
<dbReference type="PANTHER" id="PTHR43429:SF3">
    <property type="entry name" value="NITRITE REDUCTASE [NAD(P)H]"/>
    <property type="match status" value="1"/>
</dbReference>
<dbReference type="PANTHER" id="PTHR43429">
    <property type="entry name" value="PYRIDINE NUCLEOTIDE-DISULFIDE OXIDOREDUCTASE DOMAIN-CONTAINING"/>
    <property type="match status" value="1"/>
</dbReference>
<dbReference type="Pfam" id="PF07992">
    <property type="entry name" value="Pyr_redox_2"/>
    <property type="match status" value="1"/>
</dbReference>
<dbReference type="Pfam" id="PF18113">
    <property type="entry name" value="Rbx_binding"/>
    <property type="match status" value="1"/>
</dbReference>
<dbReference type="PRINTS" id="PR00368">
    <property type="entry name" value="FADPNR"/>
</dbReference>
<dbReference type="PRINTS" id="PR00411">
    <property type="entry name" value="PNDRDTASEI"/>
</dbReference>
<dbReference type="SUPFAM" id="SSF51905">
    <property type="entry name" value="FAD/NAD(P)-binding domain"/>
    <property type="match status" value="1"/>
</dbReference>